<feature type="chain" id="PRO_0000110133" description="Fluoride-specific ion channel FluC 1">
    <location>
        <begin position="1"/>
        <end position="132"/>
    </location>
</feature>
<feature type="transmembrane region" description="Helical" evidence="1">
    <location>
        <begin position="11"/>
        <end position="31"/>
    </location>
</feature>
<feature type="transmembrane region" description="Helical" evidence="1">
    <location>
        <begin position="37"/>
        <end position="57"/>
    </location>
</feature>
<feature type="transmembrane region" description="Helical" evidence="1">
    <location>
        <begin position="70"/>
        <end position="92"/>
    </location>
</feature>
<feature type="transmembrane region" description="Helical" evidence="1">
    <location>
        <begin position="105"/>
        <end position="125"/>
    </location>
</feature>
<feature type="binding site" evidence="1">
    <location>
        <position position="79"/>
    </location>
    <ligand>
        <name>Na(+)</name>
        <dbReference type="ChEBI" id="CHEBI:29101"/>
        <note>structural</note>
    </ligand>
</feature>
<feature type="binding site" evidence="1">
    <location>
        <position position="82"/>
    </location>
    <ligand>
        <name>Na(+)</name>
        <dbReference type="ChEBI" id="CHEBI:29101"/>
        <note>structural</note>
    </ligand>
</feature>
<reference key="1">
    <citation type="journal article" date="2003" name="Proc. Natl. Acad. Sci. U.S.A.">
        <title>The complete genome sequence of Mycobacterium bovis.</title>
        <authorList>
            <person name="Garnier T."/>
            <person name="Eiglmeier K."/>
            <person name="Camus J.-C."/>
            <person name="Medina N."/>
            <person name="Mansoor H."/>
            <person name="Pryor M."/>
            <person name="Duthoy S."/>
            <person name="Grondin S."/>
            <person name="Lacroix C."/>
            <person name="Monsempe C."/>
            <person name="Simon S."/>
            <person name="Harris B."/>
            <person name="Atkin R."/>
            <person name="Doggett J."/>
            <person name="Mayes R."/>
            <person name="Keating L."/>
            <person name="Wheeler P.R."/>
            <person name="Parkhill J."/>
            <person name="Barrell B.G."/>
            <person name="Cole S.T."/>
            <person name="Gordon S.V."/>
            <person name="Hewinson R.G."/>
        </authorList>
    </citation>
    <scope>NUCLEOTIDE SEQUENCE [LARGE SCALE GENOMIC DNA]</scope>
    <source>
        <strain>ATCC BAA-935 / AF2122/97</strain>
    </source>
</reference>
<reference key="2">
    <citation type="journal article" date="2017" name="Genome Announc.">
        <title>Updated reference genome sequence and annotation of Mycobacterium bovis AF2122/97.</title>
        <authorList>
            <person name="Malone K.M."/>
            <person name="Farrell D."/>
            <person name="Stuber T.P."/>
            <person name="Schubert O.T."/>
            <person name="Aebersold R."/>
            <person name="Robbe-Austerman S."/>
            <person name="Gordon S.V."/>
        </authorList>
    </citation>
    <scope>NUCLEOTIDE SEQUENCE [LARGE SCALE GENOMIC DNA]</scope>
    <scope>GENOME REANNOTATION</scope>
    <source>
        <strain>ATCC BAA-935 / AF2122/97</strain>
    </source>
</reference>
<comment type="function">
    <text evidence="1">Fluoride-specific ion channel. Important for reducing fluoride concentration in the cell, thus reducing its toxicity.</text>
</comment>
<comment type="catalytic activity">
    <reaction evidence="1">
        <text>fluoride(in) = fluoride(out)</text>
        <dbReference type="Rhea" id="RHEA:76159"/>
        <dbReference type="ChEBI" id="CHEBI:17051"/>
    </reaction>
    <physiologicalReaction direction="left-to-right" evidence="1">
        <dbReference type="Rhea" id="RHEA:76160"/>
    </physiologicalReaction>
</comment>
<comment type="activity regulation">
    <text evidence="1">Na(+) is not transported, but it plays an essential structural role and its presence is essential for fluoride channel function.</text>
</comment>
<comment type="subcellular location">
    <subcellularLocation>
        <location evidence="1">Cell membrane</location>
        <topology evidence="1">Multi-pass membrane protein</topology>
    </subcellularLocation>
</comment>
<comment type="similarity">
    <text evidence="1">Belongs to the fluoride channel Fluc/FEX (TC 1.A.43) family.</text>
</comment>
<name>FLUC1_MYCBO</name>
<proteinExistence type="inferred from homology"/>
<protein>
    <recommendedName>
        <fullName evidence="1">Fluoride-specific ion channel FluC 1</fullName>
    </recommendedName>
</protein>
<organism>
    <name type="scientific">Mycobacterium bovis (strain ATCC BAA-935 / AF2122/97)</name>
    <dbReference type="NCBI Taxonomy" id="233413"/>
    <lineage>
        <taxon>Bacteria</taxon>
        <taxon>Bacillati</taxon>
        <taxon>Actinomycetota</taxon>
        <taxon>Actinomycetes</taxon>
        <taxon>Mycobacteriales</taxon>
        <taxon>Mycobacteriaceae</taxon>
        <taxon>Mycobacterium</taxon>
        <taxon>Mycobacterium tuberculosis complex</taxon>
    </lineage>
</organism>
<evidence type="ECO:0000255" key="1">
    <source>
        <dbReference type="HAMAP-Rule" id="MF_00454"/>
    </source>
</evidence>
<accession>P63863</accession>
<accession>A0A1R3Y313</accession>
<accession>P95089</accession>
<accession>X2BMZ5</accession>
<gene>
    <name evidence="1" type="primary">fluC1</name>
    <name evidence="1" type="synonym">crcB1</name>
    <name type="ordered locus">BQ2027_MB3096</name>
</gene>
<sequence length="132" mass="14301">MPNHDYRELAAVFAGGALGALARAALSALAIPDPARWPWPTFTVNVVGAFLVGYFTTRLLERLPLSSYRRPLLGTGLCGGLTTFSTMQVETISMIEHGHWGLAAAYSVVSITLGLLAVHLATVLVRRVRIRR</sequence>
<dbReference type="EMBL" id="LT708304">
    <property type="protein sequence ID" value="SIU01721.1"/>
    <property type="molecule type" value="Genomic_DNA"/>
</dbReference>
<dbReference type="RefSeq" id="NP_856741.1">
    <property type="nucleotide sequence ID" value="NC_002945.3"/>
</dbReference>
<dbReference type="SMR" id="P63863"/>
<dbReference type="KEGG" id="mbo:BQ2027_MB3096"/>
<dbReference type="PATRIC" id="fig|233413.5.peg.3401"/>
<dbReference type="Proteomes" id="UP000001419">
    <property type="component" value="Chromosome"/>
</dbReference>
<dbReference type="GO" id="GO:0005886">
    <property type="term" value="C:plasma membrane"/>
    <property type="evidence" value="ECO:0007669"/>
    <property type="project" value="UniProtKB-SubCell"/>
</dbReference>
<dbReference type="GO" id="GO:0062054">
    <property type="term" value="F:fluoride channel activity"/>
    <property type="evidence" value="ECO:0007669"/>
    <property type="project" value="UniProtKB-UniRule"/>
</dbReference>
<dbReference type="GO" id="GO:0046872">
    <property type="term" value="F:metal ion binding"/>
    <property type="evidence" value="ECO:0007669"/>
    <property type="project" value="UniProtKB-KW"/>
</dbReference>
<dbReference type="GO" id="GO:0140114">
    <property type="term" value="P:cellular detoxification of fluoride"/>
    <property type="evidence" value="ECO:0007669"/>
    <property type="project" value="UniProtKB-UniRule"/>
</dbReference>
<dbReference type="HAMAP" id="MF_00454">
    <property type="entry name" value="FluC"/>
    <property type="match status" value="1"/>
</dbReference>
<dbReference type="InterPro" id="IPR003691">
    <property type="entry name" value="FluC"/>
</dbReference>
<dbReference type="NCBIfam" id="NF010812">
    <property type="entry name" value="PRK14216.1"/>
    <property type="match status" value="1"/>
</dbReference>
<dbReference type="PANTHER" id="PTHR28259">
    <property type="entry name" value="FLUORIDE EXPORT PROTEIN 1-RELATED"/>
    <property type="match status" value="1"/>
</dbReference>
<dbReference type="PANTHER" id="PTHR28259:SF1">
    <property type="entry name" value="FLUORIDE EXPORT PROTEIN 1-RELATED"/>
    <property type="match status" value="1"/>
</dbReference>
<dbReference type="Pfam" id="PF02537">
    <property type="entry name" value="CRCB"/>
    <property type="match status" value="1"/>
</dbReference>
<keyword id="KW-1003">Cell membrane</keyword>
<keyword id="KW-0407">Ion channel</keyword>
<keyword id="KW-0406">Ion transport</keyword>
<keyword id="KW-0472">Membrane</keyword>
<keyword id="KW-0479">Metal-binding</keyword>
<keyword id="KW-1185">Reference proteome</keyword>
<keyword id="KW-0915">Sodium</keyword>
<keyword id="KW-0812">Transmembrane</keyword>
<keyword id="KW-1133">Transmembrane helix</keyword>
<keyword id="KW-0813">Transport</keyword>